<feature type="chain" id="PRO_1000189811" description="Chromosomal replication initiator protein DnaA">
    <location>
        <begin position="1"/>
        <end position="453"/>
    </location>
</feature>
<feature type="region of interest" description="Domain I, interacts with DnaA modulators" evidence="1">
    <location>
        <begin position="1"/>
        <end position="74"/>
    </location>
</feature>
<feature type="region of interest" description="Domain II" evidence="1">
    <location>
        <begin position="74"/>
        <end position="113"/>
    </location>
</feature>
<feature type="region of interest" description="Domain III, AAA+ region" evidence="1">
    <location>
        <begin position="114"/>
        <end position="331"/>
    </location>
</feature>
<feature type="region of interest" description="Domain IV, binds dsDNA" evidence="1">
    <location>
        <begin position="332"/>
        <end position="453"/>
    </location>
</feature>
<feature type="binding site" evidence="1">
    <location>
        <position position="158"/>
    </location>
    <ligand>
        <name>ATP</name>
        <dbReference type="ChEBI" id="CHEBI:30616"/>
    </ligand>
</feature>
<feature type="binding site" evidence="1">
    <location>
        <position position="160"/>
    </location>
    <ligand>
        <name>ATP</name>
        <dbReference type="ChEBI" id="CHEBI:30616"/>
    </ligand>
</feature>
<feature type="binding site" evidence="1">
    <location>
        <position position="161"/>
    </location>
    <ligand>
        <name>ATP</name>
        <dbReference type="ChEBI" id="CHEBI:30616"/>
    </ligand>
</feature>
<feature type="binding site" evidence="1">
    <location>
        <position position="162"/>
    </location>
    <ligand>
        <name>ATP</name>
        <dbReference type="ChEBI" id="CHEBI:30616"/>
    </ligand>
</feature>
<reference key="1">
    <citation type="journal article" date="2009" name="J. Bacteriol.">
        <title>Role of conjugative elements in the evolution of the multidrug-resistant pandemic clone Streptococcus pneumoniae Spain23F ST81.</title>
        <authorList>
            <person name="Croucher N.J."/>
            <person name="Walker D."/>
            <person name="Romero P."/>
            <person name="Lennard N."/>
            <person name="Paterson G.K."/>
            <person name="Bason N.C."/>
            <person name="Mitchell A.M."/>
            <person name="Quail M.A."/>
            <person name="Andrew P.W."/>
            <person name="Parkhill J."/>
            <person name="Bentley S.D."/>
            <person name="Mitchell T.J."/>
        </authorList>
    </citation>
    <scope>NUCLEOTIDE SEQUENCE [LARGE SCALE GENOMIC DNA]</scope>
    <source>
        <strain>ATCC 700669 / Spain 23F-1</strain>
    </source>
</reference>
<protein>
    <recommendedName>
        <fullName evidence="1">Chromosomal replication initiator protein DnaA</fullName>
    </recommendedName>
</protein>
<name>DNAA_STRPJ</name>
<gene>
    <name evidence="1" type="primary">dnaA</name>
    <name type="ordered locus">SPN23F00010</name>
</gene>
<comment type="function">
    <text evidence="1">Plays an essential role in the initiation and regulation of chromosomal replication. ATP-DnaA binds to the origin of replication (oriC) to initiate formation of the DNA replication initiation complex once per cell cycle. Binds the DnaA box (a 9 base pair repeat at the origin) and separates the double-stranded (ds)DNA. Forms a right-handed helical filament on oriC DNA; dsDNA binds to the exterior of the filament while single-stranded (ss)DNA is stabiized in the filament's interior. The ATP-DnaA-oriC complex binds and stabilizes one strand of the AT-rich DNA unwinding element (DUE), permitting loading of DNA polymerase. After initiation quickly degrades to an ADP-DnaA complex that is not apt for DNA replication. Binds acidic phospholipids.</text>
</comment>
<comment type="subunit">
    <text evidence="1">Oligomerizes as a right-handed, spiral filament on DNA at oriC.</text>
</comment>
<comment type="subcellular location">
    <subcellularLocation>
        <location evidence="1">Cytoplasm</location>
    </subcellularLocation>
</comment>
<comment type="domain">
    <text evidence="1">Domain I is involved in oligomerization and binding regulators, domain II is flexibile and of varying length in different bacteria, domain III forms the AAA+ region, while domain IV binds dsDNA.</text>
</comment>
<comment type="similarity">
    <text evidence="1">Belongs to the DnaA family.</text>
</comment>
<keyword id="KW-0067">ATP-binding</keyword>
<keyword id="KW-0963">Cytoplasm</keyword>
<keyword id="KW-0235">DNA replication</keyword>
<keyword id="KW-0238">DNA-binding</keyword>
<keyword id="KW-0446">Lipid-binding</keyword>
<keyword id="KW-0547">Nucleotide-binding</keyword>
<accession>B8ZJH9</accession>
<sequence>MKEKQFWNRILEFAQERLTRSMYDFYAIQAELIKVEENVATIFLPRSEMEMVWEKQLKDIIVVAGFEIYDAEITPHYIFTKPQDTTSSQVEEATNLTLYDYSPKLVSIPYSDTGLKEKYTFDNFIQGDGNVWAVSAALAVSEDLALTYNPLFIYGGPGLGKTHLLNAIGNEILKNIPNARVKYIPAESFINDFLDHLRLGEMEKFKKTYRSLDLLLIDDIQSLSGKKVATQEEFFNTFNALHDKQKQIVLTSDRSPKHLEGLEERLVTRFSWGLTQTITPPDFETRIAILQSKTEHLGYNFQSDTLEYLAGQFDSNVRDLEGAINDITLIARVKKIKDITIDIAAEAIRARKQDVSQMLVIPIDKIQTEVGNFYGVSIKEMKGSRRLQNIVLARQVAMYLSRELTDNSLPKIGKEFGGKDHTTVIHAHAKIKSLIDQDDNLRLEIESIKKKIK</sequence>
<organism>
    <name type="scientific">Streptococcus pneumoniae (strain ATCC 700669 / Spain 23F-1)</name>
    <dbReference type="NCBI Taxonomy" id="561276"/>
    <lineage>
        <taxon>Bacteria</taxon>
        <taxon>Bacillati</taxon>
        <taxon>Bacillota</taxon>
        <taxon>Bacilli</taxon>
        <taxon>Lactobacillales</taxon>
        <taxon>Streptococcaceae</taxon>
        <taxon>Streptococcus</taxon>
    </lineage>
</organism>
<evidence type="ECO:0000255" key="1">
    <source>
        <dbReference type="HAMAP-Rule" id="MF_00377"/>
    </source>
</evidence>
<proteinExistence type="inferred from homology"/>
<dbReference type="EMBL" id="FM211187">
    <property type="protein sequence ID" value="CAR67867.1"/>
    <property type="molecule type" value="Genomic_DNA"/>
</dbReference>
<dbReference type="RefSeq" id="WP_000660615.1">
    <property type="nucleotide sequence ID" value="NC_011900.1"/>
</dbReference>
<dbReference type="SMR" id="B8ZJH9"/>
<dbReference type="GeneID" id="45652535"/>
<dbReference type="KEGG" id="sne:SPN23F00010"/>
<dbReference type="HOGENOM" id="CLU_026910_3_1_9"/>
<dbReference type="GO" id="GO:0005737">
    <property type="term" value="C:cytoplasm"/>
    <property type="evidence" value="ECO:0007669"/>
    <property type="project" value="UniProtKB-SubCell"/>
</dbReference>
<dbReference type="GO" id="GO:0005886">
    <property type="term" value="C:plasma membrane"/>
    <property type="evidence" value="ECO:0007669"/>
    <property type="project" value="TreeGrafter"/>
</dbReference>
<dbReference type="GO" id="GO:0005524">
    <property type="term" value="F:ATP binding"/>
    <property type="evidence" value="ECO:0007669"/>
    <property type="project" value="UniProtKB-UniRule"/>
</dbReference>
<dbReference type="GO" id="GO:0016887">
    <property type="term" value="F:ATP hydrolysis activity"/>
    <property type="evidence" value="ECO:0007669"/>
    <property type="project" value="InterPro"/>
</dbReference>
<dbReference type="GO" id="GO:0003688">
    <property type="term" value="F:DNA replication origin binding"/>
    <property type="evidence" value="ECO:0007669"/>
    <property type="project" value="UniProtKB-UniRule"/>
</dbReference>
<dbReference type="GO" id="GO:0008289">
    <property type="term" value="F:lipid binding"/>
    <property type="evidence" value="ECO:0007669"/>
    <property type="project" value="UniProtKB-KW"/>
</dbReference>
<dbReference type="GO" id="GO:0006270">
    <property type="term" value="P:DNA replication initiation"/>
    <property type="evidence" value="ECO:0007669"/>
    <property type="project" value="UniProtKB-UniRule"/>
</dbReference>
<dbReference type="GO" id="GO:0006275">
    <property type="term" value="P:regulation of DNA replication"/>
    <property type="evidence" value="ECO:0007669"/>
    <property type="project" value="UniProtKB-UniRule"/>
</dbReference>
<dbReference type="CDD" id="cd00009">
    <property type="entry name" value="AAA"/>
    <property type="match status" value="1"/>
</dbReference>
<dbReference type="CDD" id="cd06571">
    <property type="entry name" value="Bac_DnaA_C"/>
    <property type="match status" value="1"/>
</dbReference>
<dbReference type="FunFam" id="1.10.1750.10:FF:000002">
    <property type="entry name" value="Chromosomal replication initiator protein DnaA"/>
    <property type="match status" value="1"/>
</dbReference>
<dbReference type="FunFam" id="1.10.8.60:FF:000129">
    <property type="entry name" value="Chromosomal replication initiator protein DnaA"/>
    <property type="match status" value="1"/>
</dbReference>
<dbReference type="FunFam" id="3.40.50.300:FF:000668">
    <property type="entry name" value="Chromosomal replication initiator protein DnaA"/>
    <property type="match status" value="1"/>
</dbReference>
<dbReference type="Gene3D" id="1.10.1750.10">
    <property type="match status" value="1"/>
</dbReference>
<dbReference type="Gene3D" id="1.10.8.60">
    <property type="match status" value="1"/>
</dbReference>
<dbReference type="Gene3D" id="3.40.50.300">
    <property type="entry name" value="P-loop containing nucleotide triphosphate hydrolases"/>
    <property type="match status" value="1"/>
</dbReference>
<dbReference type="HAMAP" id="MF_00377">
    <property type="entry name" value="DnaA_bact"/>
    <property type="match status" value="1"/>
</dbReference>
<dbReference type="InterPro" id="IPR003593">
    <property type="entry name" value="AAA+_ATPase"/>
</dbReference>
<dbReference type="InterPro" id="IPR001957">
    <property type="entry name" value="Chromosome_initiator_DnaA"/>
</dbReference>
<dbReference type="InterPro" id="IPR020591">
    <property type="entry name" value="Chromosome_initiator_DnaA-like"/>
</dbReference>
<dbReference type="InterPro" id="IPR018312">
    <property type="entry name" value="Chromosome_initiator_DnaA_CS"/>
</dbReference>
<dbReference type="InterPro" id="IPR013159">
    <property type="entry name" value="DnaA_C"/>
</dbReference>
<dbReference type="InterPro" id="IPR013317">
    <property type="entry name" value="DnaA_dom"/>
</dbReference>
<dbReference type="InterPro" id="IPR027417">
    <property type="entry name" value="P-loop_NTPase"/>
</dbReference>
<dbReference type="InterPro" id="IPR010921">
    <property type="entry name" value="Trp_repressor/repl_initiator"/>
</dbReference>
<dbReference type="NCBIfam" id="TIGR00362">
    <property type="entry name" value="DnaA"/>
    <property type="match status" value="1"/>
</dbReference>
<dbReference type="PANTHER" id="PTHR30050">
    <property type="entry name" value="CHROMOSOMAL REPLICATION INITIATOR PROTEIN DNAA"/>
    <property type="match status" value="1"/>
</dbReference>
<dbReference type="PANTHER" id="PTHR30050:SF2">
    <property type="entry name" value="CHROMOSOMAL REPLICATION INITIATOR PROTEIN DNAA"/>
    <property type="match status" value="1"/>
</dbReference>
<dbReference type="Pfam" id="PF00308">
    <property type="entry name" value="Bac_DnaA"/>
    <property type="match status" value="1"/>
</dbReference>
<dbReference type="Pfam" id="PF08299">
    <property type="entry name" value="Bac_DnaA_C"/>
    <property type="match status" value="1"/>
</dbReference>
<dbReference type="PRINTS" id="PR00051">
    <property type="entry name" value="DNAA"/>
</dbReference>
<dbReference type="SMART" id="SM00382">
    <property type="entry name" value="AAA"/>
    <property type="match status" value="1"/>
</dbReference>
<dbReference type="SMART" id="SM00760">
    <property type="entry name" value="Bac_DnaA_C"/>
    <property type="match status" value="1"/>
</dbReference>
<dbReference type="SUPFAM" id="SSF52540">
    <property type="entry name" value="P-loop containing nucleoside triphosphate hydrolases"/>
    <property type="match status" value="1"/>
</dbReference>
<dbReference type="SUPFAM" id="SSF48295">
    <property type="entry name" value="TrpR-like"/>
    <property type="match status" value="1"/>
</dbReference>
<dbReference type="PROSITE" id="PS01008">
    <property type="entry name" value="DNAA"/>
    <property type="match status" value="1"/>
</dbReference>